<feature type="signal peptide" evidence="2">
    <location>
        <begin position="1"/>
        <end position="17"/>
    </location>
</feature>
<feature type="propeptide" id="PRO_0000020933" evidence="1">
    <location>
        <begin position="18"/>
        <end position="29"/>
    </location>
</feature>
<feature type="peptide" id="PRO_0000020934" description="Clavaspirin">
    <location>
        <begin position="30"/>
        <end position="52"/>
    </location>
</feature>
<feature type="propeptide" id="PRO_0000020935" evidence="1">
    <location>
        <begin position="53"/>
        <end position="80"/>
    </location>
</feature>
<feature type="modified residue" description="Leucine amide" evidence="1">
    <location>
        <position position="52"/>
    </location>
</feature>
<sequence>MKTIILILLILGLGIDAKSLEESKADEEKFLRFIGSVIHGIGHLVHHIGVALGDDQQDNGKFYGYYAEDNGKHWYDTGDQ</sequence>
<comment type="function">
    <text evidence="3">Exhibits broad-spectrum antimicrobial activity against both Gram-positive and Gram-negative bacteria. Has potent hemolytic activity.</text>
</comment>
<comment type="subcellular location">
    <subcellularLocation>
        <location>Secreted</location>
    </subcellularLocation>
</comment>
<comment type="tissue specificity">
    <text evidence="3">Pharyngeal tissues and hemocytes.</text>
</comment>
<organism>
    <name type="scientific">Styela clava</name>
    <name type="common">Sea squirt</name>
    <dbReference type="NCBI Taxonomy" id="7725"/>
    <lineage>
        <taxon>Eukaryota</taxon>
        <taxon>Metazoa</taxon>
        <taxon>Chordata</taxon>
        <taxon>Tunicata</taxon>
        <taxon>Ascidiacea</taxon>
        <taxon>Stolidobranchia</taxon>
        <taxon>Styelidae</taxon>
        <taxon>Styela</taxon>
    </lineage>
</organism>
<dbReference type="EMBL" id="Y17680">
    <property type="protein sequence ID" value="CAA76812.1"/>
    <property type="molecule type" value="mRNA"/>
</dbReference>
<dbReference type="GO" id="GO:0005576">
    <property type="term" value="C:extracellular region"/>
    <property type="evidence" value="ECO:0007669"/>
    <property type="project" value="UniProtKB-SubCell"/>
</dbReference>
<dbReference type="GO" id="GO:0042742">
    <property type="term" value="P:defense response to bacterium"/>
    <property type="evidence" value="ECO:0007669"/>
    <property type="project" value="UniProtKB-KW"/>
</dbReference>
<dbReference type="GO" id="GO:0031640">
    <property type="term" value="P:killing of cells of another organism"/>
    <property type="evidence" value="ECO:0007669"/>
    <property type="project" value="UniProtKB-KW"/>
</dbReference>
<dbReference type="InterPro" id="IPR008453">
    <property type="entry name" value="Clavanin"/>
</dbReference>
<dbReference type="Pfam" id="PF05452">
    <property type="entry name" value="Clavanin"/>
    <property type="match status" value="1"/>
</dbReference>
<proteinExistence type="evidence at transcript level"/>
<keyword id="KW-0027">Amidation</keyword>
<keyword id="KW-0044">Antibiotic</keyword>
<keyword id="KW-0929">Antimicrobial</keyword>
<keyword id="KW-0204">Cytolysis</keyword>
<keyword id="KW-0354">Hemolysis</keyword>
<keyword id="KW-0964">Secreted</keyword>
<keyword id="KW-0732">Signal</keyword>
<name>CLAPI_STYCL</name>
<reference key="1">
    <citation type="journal article" date="2001" name="J. Pept. Res.">
        <title>Clavaspirin, an antibacterial and haemolytic peptide from Styela clava.</title>
        <authorList>
            <person name="Lee I.-H."/>
            <person name="Zhao C."/>
            <person name="Nguyen T."/>
            <person name="Menzel L."/>
            <person name="Waring A.J."/>
            <person name="Sherman M.A."/>
            <person name="Lehrer R.I."/>
        </authorList>
    </citation>
    <scope>NUCLEOTIDE SEQUENCE [MRNA]</scope>
    <scope>SYNTHESIS OF 30-52</scope>
    <scope>FUNCTION</scope>
    <scope>TISSUE SPECIFICITY</scope>
    <source>
        <tissue>Pharynx</tissue>
    </source>
</reference>
<protein>
    <recommendedName>
        <fullName>Clavaspirin</fullName>
    </recommendedName>
</protein>
<accession>O97395</accession>
<evidence type="ECO:0000250" key="1"/>
<evidence type="ECO:0000255" key="2"/>
<evidence type="ECO:0000269" key="3">
    <source>
    </source>
</evidence>